<sequence>MGRKWNNIKEKKAQKDKNTSRIYAKFGKEIYVAAKSGEPNPESNQALRLVLERAKTYSVPNHIIEKAIDKAKGAGDENFDHLRYEGFGPSGSMLIVDALTNNVNRTASDVRAAFGKNGGNMGVSGSVAYMFDHVATFGIEGKSVDEILETLMEQDVDVNDVIDDNGLTIVYAEPDQFAVVQDALRAAGVEEFKVAEFEMLPQTDIELSEADQVTFEKLIDALEDLEDVQNVFHNVDLK</sequence>
<gene>
    <name type="ordered locus">SaurJH1_0708</name>
</gene>
<name>Y708_STAA2</name>
<feature type="chain" id="PRO_1000083171" description="Probable transcriptional regulatory protein SaurJH1_0708">
    <location>
        <begin position="1"/>
        <end position="238"/>
    </location>
</feature>
<accession>A6TZE7</accession>
<organism>
    <name type="scientific">Staphylococcus aureus (strain JH1)</name>
    <dbReference type="NCBI Taxonomy" id="359787"/>
    <lineage>
        <taxon>Bacteria</taxon>
        <taxon>Bacillati</taxon>
        <taxon>Bacillota</taxon>
        <taxon>Bacilli</taxon>
        <taxon>Bacillales</taxon>
        <taxon>Staphylococcaceae</taxon>
        <taxon>Staphylococcus</taxon>
    </lineage>
</organism>
<evidence type="ECO:0000255" key="1">
    <source>
        <dbReference type="HAMAP-Rule" id="MF_00918"/>
    </source>
</evidence>
<reference key="1">
    <citation type="submission" date="2007-06" db="EMBL/GenBank/DDBJ databases">
        <title>Complete sequence of chromosome of Staphylococcus aureus subsp. aureus JH1.</title>
        <authorList>
            <consortium name="US DOE Joint Genome Institute"/>
            <person name="Copeland A."/>
            <person name="Lucas S."/>
            <person name="Lapidus A."/>
            <person name="Barry K."/>
            <person name="Detter J.C."/>
            <person name="Glavina del Rio T."/>
            <person name="Hammon N."/>
            <person name="Israni S."/>
            <person name="Dalin E."/>
            <person name="Tice H."/>
            <person name="Pitluck S."/>
            <person name="Chain P."/>
            <person name="Malfatti S."/>
            <person name="Shin M."/>
            <person name="Vergez L."/>
            <person name="Schmutz J."/>
            <person name="Larimer F."/>
            <person name="Land M."/>
            <person name="Hauser L."/>
            <person name="Kyrpides N."/>
            <person name="Ivanova N."/>
            <person name="Tomasz A."/>
            <person name="Richardson P."/>
        </authorList>
    </citation>
    <scope>NUCLEOTIDE SEQUENCE [LARGE SCALE GENOMIC DNA]</scope>
    <source>
        <strain>JH1</strain>
    </source>
</reference>
<proteinExistence type="inferred from homology"/>
<keyword id="KW-0963">Cytoplasm</keyword>
<keyword id="KW-0238">DNA-binding</keyword>
<keyword id="KW-0804">Transcription</keyword>
<keyword id="KW-0805">Transcription regulation</keyword>
<protein>
    <recommendedName>
        <fullName evidence="1">Probable transcriptional regulatory protein SaurJH1_0708</fullName>
    </recommendedName>
</protein>
<comment type="subcellular location">
    <subcellularLocation>
        <location evidence="1">Cytoplasm</location>
    </subcellularLocation>
</comment>
<comment type="similarity">
    <text evidence="1">Belongs to the TACO1 family. YeeN subfamily.</text>
</comment>
<dbReference type="EMBL" id="CP000736">
    <property type="protein sequence ID" value="ABR51565.1"/>
    <property type="molecule type" value="Genomic_DNA"/>
</dbReference>
<dbReference type="SMR" id="A6TZE7"/>
<dbReference type="KEGG" id="sah:SaurJH1_0708"/>
<dbReference type="HOGENOM" id="CLU_062974_2_0_9"/>
<dbReference type="GO" id="GO:0005829">
    <property type="term" value="C:cytosol"/>
    <property type="evidence" value="ECO:0007669"/>
    <property type="project" value="TreeGrafter"/>
</dbReference>
<dbReference type="GO" id="GO:0003677">
    <property type="term" value="F:DNA binding"/>
    <property type="evidence" value="ECO:0007669"/>
    <property type="project" value="UniProtKB-UniRule"/>
</dbReference>
<dbReference type="GO" id="GO:0006355">
    <property type="term" value="P:regulation of DNA-templated transcription"/>
    <property type="evidence" value="ECO:0007669"/>
    <property type="project" value="UniProtKB-UniRule"/>
</dbReference>
<dbReference type="FunFam" id="1.10.10.200:FF:000003">
    <property type="entry name" value="Probable transcriptional regulatory protein YeeN"/>
    <property type="match status" value="1"/>
</dbReference>
<dbReference type="Gene3D" id="1.10.10.200">
    <property type="match status" value="1"/>
</dbReference>
<dbReference type="Gene3D" id="3.30.70.980">
    <property type="match status" value="2"/>
</dbReference>
<dbReference type="HAMAP" id="MF_00693">
    <property type="entry name" value="Transcrip_reg_TACO1"/>
    <property type="match status" value="1"/>
</dbReference>
<dbReference type="HAMAP" id="MF_00918">
    <property type="entry name" value="Transcrip_reg_TACO1_YeeN"/>
    <property type="match status" value="1"/>
</dbReference>
<dbReference type="InterPro" id="IPR017856">
    <property type="entry name" value="Integrase-like_N"/>
</dbReference>
<dbReference type="InterPro" id="IPR048300">
    <property type="entry name" value="TACO1_YebC-like_2nd/3rd_dom"/>
</dbReference>
<dbReference type="InterPro" id="IPR049083">
    <property type="entry name" value="TACO1_YebC_N"/>
</dbReference>
<dbReference type="InterPro" id="IPR002876">
    <property type="entry name" value="Transcrip_reg_TACO1-like"/>
</dbReference>
<dbReference type="InterPro" id="IPR026564">
    <property type="entry name" value="Transcrip_reg_TACO1-like_dom3"/>
</dbReference>
<dbReference type="InterPro" id="IPR026562">
    <property type="entry name" value="Transcrip_reg_TACO1_YeeN"/>
</dbReference>
<dbReference type="InterPro" id="IPR029072">
    <property type="entry name" value="YebC-like"/>
</dbReference>
<dbReference type="NCBIfam" id="NF001030">
    <property type="entry name" value="PRK00110.1"/>
    <property type="match status" value="1"/>
</dbReference>
<dbReference type="NCBIfam" id="NF009044">
    <property type="entry name" value="PRK12378.1"/>
    <property type="match status" value="1"/>
</dbReference>
<dbReference type="NCBIfam" id="TIGR01033">
    <property type="entry name" value="YebC/PmpR family DNA-binding transcriptional regulator"/>
    <property type="match status" value="1"/>
</dbReference>
<dbReference type="PANTHER" id="PTHR12532">
    <property type="entry name" value="TRANSLATIONAL ACTIVATOR OF CYTOCHROME C OXIDASE 1"/>
    <property type="match status" value="1"/>
</dbReference>
<dbReference type="PANTHER" id="PTHR12532:SF0">
    <property type="entry name" value="TRANSLATIONAL ACTIVATOR OF CYTOCHROME C OXIDASE 1"/>
    <property type="match status" value="1"/>
</dbReference>
<dbReference type="Pfam" id="PF20772">
    <property type="entry name" value="TACO1_YebC_N"/>
    <property type="match status" value="1"/>
</dbReference>
<dbReference type="Pfam" id="PF01709">
    <property type="entry name" value="Transcrip_reg"/>
    <property type="match status" value="1"/>
</dbReference>
<dbReference type="SUPFAM" id="SSF75625">
    <property type="entry name" value="YebC-like"/>
    <property type="match status" value="1"/>
</dbReference>